<evidence type="ECO:0000255" key="1">
    <source>
        <dbReference type="HAMAP-Rule" id="MF_00523"/>
    </source>
</evidence>
<dbReference type="EC" id="2.3.1.191" evidence="1"/>
<dbReference type="EMBL" id="BX248583">
    <property type="protein sequence ID" value="CAD83352.1"/>
    <property type="molecule type" value="Genomic_DNA"/>
</dbReference>
<dbReference type="SMR" id="Q7VRD6"/>
<dbReference type="STRING" id="203907.Bfl281"/>
<dbReference type="KEGG" id="bfl:Bfl281"/>
<dbReference type="eggNOG" id="COG1044">
    <property type="taxonomic scope" value="Bacteria"/>
</dbReference>
<dbReference type="HOGENOM" id="CLU_049865_0_1_6"/>
<dbReference type="OrthoDB" id="9784739at2"/>
<dbReference type="UniPathway" id="UPA00359">
    <property type="reaction ID" value="UER00479"/>
</dbReference>
<dbReference type="Proteomes" id="UP000002192">
    <property type="component" value="Chromosome"/>
</dbReference>
<dbReference type="GO" id="GO:0016020">
    <property type="term" value="C:membrane"/>
    <property type="evidence" value="ECO:0007669"/>
    <property type="project" value="GOC"/>
</dbReference>
<dbReference type="GO" id="GO:0016410">
    <property type="term" value="F:N-acyltransferase activity"/>
    <property type="evidence" value="ECO:0007669"/>
    <property type="project" value="InterPro"/>
</dbReference>
<dbReference type="GO" id="GO:0103118">
    <property type="term" value="F:UDP-3-O-(R-3-hydroxymyristoyl)-glucosamine N-acyltransferase activity"/>
    <property type="evidence" value="ECO:0007669"/>
    <property type="project" value="UniProtKB-EC"/>
</dbReference>
<dbReference type="GO" id="GO:0009245">
    <property type="term" value="P:lipid A biosynthetic process"/>
    <property type="evidence" value="ECO:0007669"/>
    <property type="project" value="UniProtKB-UniRule"/>
</dbReference>
<dbReference type="CDD" id="cd03352">
    <property type="entry name" value="LbH_LpxD"/>
    <property type="match status" value="1"/>
</dbReference>
<dbReference type="Gene3D" id="1.20.5.170">
    <property type="match status" value="1"/>
</dbReference>
<dbReference type="Gene3D" id="2.160.10.10">
    <property type="entry name" value="Hexapeptide repeat proteins"/>
    <property type="match status" value="1"/>
</dbReference>
<dbReference type="Gene3D" id="3.40.1390.10">
    <property type="entry name" value="MurE/MurF, N-terminal domain"/>
    <property type="match status" value="1"/>
</dbReference>
<dbReference type="HAMAP" id="MF_00523">
    <property type="entry name" value="LpxD"/>
    <property type="match status" value="1"/>
</dbReference>
<dbReference type="InterPro" id="IPR001451">
    <property type="entry name" value="Hexapep"/>
</dbReference>
<dbReference type="InterPro" id="IPR018357">
    <property type="entry name" value="Hexapep_transf_CS"/>
</dbReference>
<dbReference type="InterPro" id="IPR007691">
    <property type="entry name" value="LpxD"/>
</dbReference>
<dbReference type="InterPro" id="IPR011004">
    <property type="entry name" value="Trimer_LpxA-like_sf"/>
</dbReference>
<dbReference type="InterPro" id="IPR020573">
    <property type="entry name" value="UDP_GlcNAc_AcTrfase_non-rep"/>
</dbReference>
<dbReference type="NCBIfam" id="TIGR01853">
    <property type="entry name" value="lipid_A_lpxD"/>
    <property type="match status" value="1"/>
</dbReference>
<dbReference type="NCBIfam" id="NF002060">
    <property type="entry name" value="PRK00892.1"/>
    <property type="match status" value="1"/>
</dbReference>
<dbReference type="PANTHER" id="PTHR43378">
    <property type="entry name" value="UDP-3-O-ACYLGLUCOSAMINE N-ACYLTRANSFERASE"/>
    <property type="match status" value="1"/>
</dbReference>
<dbReference type="PANTHER" id="PTHR43378:SF2">
    <property type="entry name" value="UDP-3-O-ACYLGLUCOSAMINE N-ACYLTRANSFERASE 1, MITOCHONDRIAL-RELATED"/>
    <property type="match status" value="1"/>
</dbReference>
<dbReference type="Pfam" id="PF00132">
    <property type="entry name" value="Hexapep"/>
    <property type="match status" value="1"/>
</dbReference>
<dbReference type="Pfam" id="PF04613">
    <property type="entry name" value="LpxD"/>
    <property type="match status" value="1"/>
</dbReference>
<dbReference type="SUPFAM" id="SSF51161">
    <property type="entry name" value="Trimeric LpxA-like enzymes"/>
    <property type="match status" value="1"/>
</dbReference>
<dbReference type="PROSITE" id="PS00101">
    <property type="entry name" value="HEXAPEP_TRANSFERASES"/>
    <property type="match status" value="1"/>
</dbReference>
<protein>
    <recommendedName>
        <fullName evidence="1">UDP-3-O-(3-hydroxymyristoyl)glucosamine N-acyltransferase</fullName>
        <shortName evidence="1">UDP-3-O-(3-OHC14)-GlcN N-acyltransferase</shortName>
        <ecNumber evidence="1">2.3.1.191</ecNumber>
    </recommendedName>
    <alternativeName>
        <fullName evidence="1">UDP-3-O-(3-hydroxytetradecanoyl)glucosamine N-acyltransferase</fullName>
    </alternativeName>
</protein>
<accession>Q7VRD6</accession>
<comment type="function">
    <text evidence="1">Catalyzes the N-acylation of UDP-3-O-(hydroxytetradecanoyl)glucosamine using 3-hydroxytetradecanoyl-ACP as the acyl donor. Is involved in the biosynthesis of lipid A, a phosphorylated glycolipid that anchors the lipopolysaccharide to the outer membrane of the cell.</text>
</comment>
<comment type="catalytic activity">
    <reaction evidence="1">
        <text>a UDP-3-O-[(3R)-3-hydroxyacyl]-alpha-D-glucosamine + a (3R)-hydroxyacyl-[ACP] = a UDP-2-N,3-O-bis[(3R)-3-hydroxyacyl]-alpha-D-glucosamine + holo-[ACP] + H(+)</text>
        <dbReference type="Rhea" id="RHEA:53836"/>
        <dbReference type="Rhea" id="RHEA-COMP:9685"/>
        <dbReference type="Rhea" id="RHEA-COMP:9945"/>
        <dbReference type="ChEBI" id="CHEBI:15378"/>
        <dbReference type="ChEBI" id="CHEBI:64479"/>
        <dbReference type="ChEBI" id="CHEBI:78827"/>
        <dbReference type="ChEBI" id="CHEBI:137740"/>
        <dbReference type="ChEBI" id="CHEBI:137748"/>
        <dbReference type="EC" id="2.3.1.191"/>
    </reaction>
</comment>
<comment type="catalytic activity">
    <reaction evidence="1">
        <text>UDP-3-O-[(3R)-3-hydroxytetradecanoyl]-alpha-D-glucosamine + (3R)-hydroxytetradecanoyl-[ACP] = UDP-2-N,3-O-bis[(3R)-3-hydroxytetradecanoyl]-alpha-D-glucosamine + holo-[ACP] + H(+)</text>
        <dbReference type="Rhea" id="RHEA:17817"/>
        <dbReference type="Rhea" id="RHEA-COMP:9646"/>
        <dbReference type="Rhea" id="RHEA-COMP:9685"/>
        <dbReference type="ChEBI" id="CHEBI:15378"/>
        <dbReference type="ChEBI" id="CHEBI:64479"/>
        <dbReference type="ChEBI" id="CHEBI:71573"/>
        <dbReference type="ChEBI" id="CHEBI:78474"/>
        <dbReference type="ChEBI" id="CHEBI:78847"/>
    </reaction>
</comment>
<comment type="pathway">
    <text evidence="1">Glycolipid biosynthesis; lipid IV(A) biosynthesis; lipid IV(A) from (3R)-3-hydroxytetradecanoyl-[acyl-carrier-protein] and UDP-N-acetyl-alpha-D-glucosamine: step 3/6.</text>
</comment>
<comment type="subunit">
    <text evidence="1">Homotrimer.</text>
</comment>
<comment type="similarity">
    <text evidence="1">Belongs to the transferase hexapeptide repeat family. LpxD subfamily.</text>
</comment>
<proteinExistence type="inferred from homology"/>
<feature type="chain" id="PRO_0000059659" description="UDP-3-O-(3-hydroxymyristoyl)glucosamine N-acyltransferase">
    <location>
        <begin position="1"/>
        <end position="369"/>
    </location>
</feature>
<feature type="active site" description="Proton acceptor" evidence="1">
    <location>
        <position position="240"/>
    </location>
</feature>
<keyword id="KW-0012">Acyltransferase</keyword>
<keyword id="KW-0441">Lipid A biosynthesis</keyword>
<keyword id="KW-0444">Lipid biosynthesis</keyword>
<keyword id="KW-0443">Lipid metabolism</keyword>
<keyword id="KW-1185">Reference proteome</keyword>
<keyword id="KW-0677">Repeat</keyword>
<keyword id="KW-0808">Transferase</keyword>
<name>LPXD_BLOFL</name>
<sequence>MAVKISLVDLAQNIGAELHGDKNILITHVSSIKNAQVGHITFLKNSRFREQLKSCAASAVILSQDNLSFCRVSALVVKNPYLAYVKVAQLLDSSPKLNANIKSQSVIHSNSILGKDVGIGYNVIIESGVIISDNVKIESGCIIGKNVKIGIGTYLWSNVTVYHGVEIGEYCIIQSGSIIGSDGFGYIKNDGVWIKIPQLGKVSIGNNVEIGSCTTIDRGTLDDTCIGDGVIIDNQCQIAHNVAIGSHTAIAGGVIIAGSVVIGKSCMIGGASVINGHIRICDKVTITGMSMVMKSITTSGIYSSGIPVQPNFAWRRTAALVMRIHSIDKRIKDIEQKVNCFFYIVIVGFFIVLGLTGLFPLIYFFVKQG</sequence>
<gene>
    <name evidence="1" type="primary">lpxD</name>
    <name type="ordered locus">Bfl281</name>
</gene>
<reference key="1">
    <citation type="journal article" date="2003" name="Proc. Natl. Acad. Sci. U.S.A.">
        <title>The genome sequence of Blochmannia floridanus: comparative analysis of reduced genomes.</title>
        <authorList>
            <person name="Gil R."/>
            <person name="Silva F.J."/>
            <person name="Zientz E."/>
            <person name="Delmotte F."/>
            <person name="Gonzalez-Candelas F."/>
            <person name="Latorre A."/>
            <person name="Rausell C."/>
            <person name="Kamerbeek J."/>
            <person name="Gadau J."/>
            <person name="Hoelldobler B."/>
            <person name="van Ham R.C.H.J."/>
            <person name="Gross R."/>
            <person name="Moya A."/>
        </authorList>
    </citation>
    <scope>NUCLEOTIDE SEQUENCE [LARGE SCALE GENOMIC DNA]</scope>
</reference>
<organism>
    <name type="scientific">Blochmanniella floridana</name>
    <dbReference type="NCBI Taxonomy" id="203907"/>
    <lineage>
        <taxon>Bacteria</taxon>
        <taxon>Pseudomonadati</taxon>
        <taxon>Pseudomonadota</taxon>
        <taxon>Gammaproteobacteria</taxon>
        <taxon>Enterobacterales</taxon>
        <taxon>Enterobacteriaceae</taxon>
        <taxon>ant endosymbionts</taxon>
        <taxon>Candidatus Blochmanniella</taxon>
    </lineage>
</organism>